<proteinExistence type="evidence at protein level"/>
<gene>
    <name type="primary">Gfpt1</name>
</gene>
<feature type="initiator methionine" description="Removed" evidence="6">
    <location>
        <position position="1"/>
    </location>
</feature>
<feature type="chain" id="PRO_0000135282" description="Glutamine--fructose-6-phosphate aminotransferase [isomerizing] 1">
    <location>
        <begin position="2"/>
        <end position="681"/>
    </location>
</feature>
<feature type="domain" description="Glutamine amidotransferase type-2" evidence="4">
    <location>
        <begin position="2"/>
        <end position="287"/>
    </location>
</feature>
<feature type="domain" description="SIS 1" evidence="5">
    <location>
        <begin position="359"/>
        <end position="498"/>
    </location>
</feature>
<feature type="domain" description="SIS 2" evidence="5">
    <location>
        <begin position="530"/>
        <end position="671"/>
    </location>
</feature>
<feature type="region of interest" description="Isomerase" evidence="1">
    <location>
        <begin position="295"/>
        <end position="662"/>
    </location>
</feature>
<feature type="active site" description="For GATase activity" evidence="2">
    <location>
        <position position="2"/>
    </location>
</feature>
<feature type="binding site" evidence="3">
    <location>
        <begin position="376"/>
        <end position="377"/>
    </location>
    <ligand>
        <name>substrate</name>
    </ligand>
</feature>
<feature type="binding site" evidence="3">
    <location>
        <begin position="421"/>
        <end position="423"/>
    </location>
    <ligand>
        <name>substrate</name>
    </ligand>
</feature>
<feature type="binding site" evidence="3">
    <location>
        <position position="426"/>
    </location>
    <ligand>
        <name>substrate</name>
    </ligand>
</feature>
<feature type="binding site" evidence="3">
    <location>
        <position position="577"/>
    </location>
    <ligand>
        <name>substrate</name>
    </ligand>
</feature>
<feature type="modified residue" description="Phosphoserine" evidence="3">
    <location>
        <position position="103"/>
    </location>
</feature>
<feature type="modified residue" description="Phosphoserine" evidence="9">
    <location>
        <position position="243"/>
    </location>
</feature>
<name>GFPT1_RAT</name>
<reference key="1">
    <citation type="journal article" date="2004" name="Genome Res.">
        <title>The status, quality, and expansion of the NIH full-length cDNA project: the Mammalian Gene Collection (MGC).</title>
        <authorList>
            <consortium name="The MGC Project Team"/>
        </authorList>
    </citation>
    <scope>NUCLEOTIDE SEQUENCE [LARGE SCALE MRNA]</scope>
    <source>
        <tissue>Testis</tissue>
    </source>
</reference>
<reference evidence="7" key="2">
    <citation type="journal article" date="2000" name="Arch. Biochem. Biophys.">
        <title>Purification and characterization of glutamine:fructose 6-phosphate amidotransferase from rat liver.</title>
        <authorList>
            <person name="Huynh Q.K."/>
            <person name="Gulve E.A."/>
            <person name="Dian T."/>
        </authorList>
    </citation>
    <scope>PROTEIN SEQUENCE OF 2-14</scope>
    <scope>FUNCTION</scope>
    <scope>CATALYTIC ACTIVITY</scope>
    <scope>ACTIVITY REGULATION</scope>
    <source>
        <strain evidence="6">Sprague-Dawley</strain>
        <tissue evidence="6">Liver</tissue>
    </source>
</reference>
<reference key="3">
    <citation type="journal article" date="2012" name="Nat. Commun.">
        <title>Quantitative maps of protein phosphorylation sites across 14 different rat organs and tissues.</title>
        <authorList>
            <person name="Lundby A."/>
            <person name="Secher A."/>
            <person name="Lage K."/>
            <person name="Nordsborg N.B."/>
            <person name="Dmytriyev A."/>
            <person name="Lundby C."/>
            <person name="Olsen J.V."/>
        </authorList>
    </citation>
    <scope>PHOSPHORYLATION [LARGE SCALE ANALYSIS] AT SER-243</scope>
    <scope>IDENTIFICATION BY MASS SPECTROMETRY [LARGE SCALE ANALYSIS]</scope>
</reference>
<evidence type="ECO:0000250" key="1"/>
<evidence type="ECO:0000250" key="2">
    <source>
        <dbReference type="UniProtKB" id="P14742"/>
    </source>
</evidence>
<evidence type="ECO:0000250" key="3">
    <source>
        <dbReference type="UniProtKB" id="Q06210"/>
    </source>
</evidence>
<evidence type="ECO:0000255" key="4">
    <source>
        <dbReference type="PROSITE-ProRule" id="PRU00609"/>
    </source>
</evidence>
<evidence type="ECO:0000255" key="5">
    <source>
        <dbReference type="PROSITE-ProRule" id="PRU00797"/>
    </source>
</evidence>
<evidence type="ECO:0000269" key="6">
    <source>
    </source>
</evidence>
<evidence type="ECO:0000305" key="7"/>
<evidence type="ECO:0000305" key="8">
    <source>
    </source>
</evidence>
<evidence type="ECO:0007744" key="9">
    <source>
    </source>
</evidence>
<accession>P82808</accession>
<accession>Q5XI08</accession>
<comment type="function">
    <text evidence="3 6">Controls the flux of glucose into the hexosamine pathway. Most likely involved in regulating the availability of precursors for N- and O-linked glycosylation of proteins. Regulates the circadian expression of clock genes BMAL1 and CRY1 (PubMed:10898949). Has a role in fine tuning the metabolic fluctuations of cytosolic UDP-GlcNAc and its effects on hyaluronan synthesis that occur during tissue remodeling (By similarity).</text>
</comment>
<comment type="catalytic activity">
    <reaction evidence="6">
        <text>D-fructose 6-phosphate + L-glutamine = D-glucosamine 6-phosphate + L-glutamate</text>
        <dbReference type="Rhea" id="RHEA:13237"/>
        <dbReference type="ChEBI" id="CHEBI:29985"/>
        <dbReference type="ChEBI" id="CHEBI:58359"/>
        <dbReference type="ChEBI" id="CHEBI:58725"/>
        <dbReference type="ChEBI" id="CHEBI:61527"/>
        <dbReference type="EC" id="2.6.1.16"/>
    </reaction>
</comment>
<comment type="activity regulation">
    <text evidence="6">Inhibited by 4,4'-dithiodipyridine.</text>
</comment>
<comment type="biophysicochemical properties">
    <phDependence>
        <text>Optimum pH is 7.5.</text>
    </phDependence>
</comment>
<comment type="pathway">
    <text evidence="8">Nucleotide-sugar biosynthesis; UDP-N-acetyl-alpha-D-glucosamine biosynthesis; alpha-D-glucosamine 6-phosphate from D-fructose 6-phosphate: step 1/1.</text>
</comment>
<comment type="subunit">
    <text evidence="1">Homotetramer, may also exist as homodimers.</text>
</comment>
<organism>
    <name type="scientific">Rattus norvegicus</name>
    <name type="common">Rat</name>
    <dbReference type="NCBI Taxonomy" id="10116"/>
    <lineage>
        <taxon>Eukaryota</taxon>
        <taxon>Metazoa</taxon>
        <taxon>Chordata</taxon>
        <taxon>Craniata</taxon>
        <taxon>Vertebrata</taxon>
        <taxon>Euteleostomi</taxon>
        <taxon>Mammalia</taxon>
        <taxon>Eutheria</taxon>
        <taxon>Euarchontoglires</taxon>
        <taxon>Glires</taxon>
        <taxon>Rodentia</taxon>
        <taxon>Myomorpha</taxon>
        <taxon>Muroidea</taxon>
        <taxon>Muridae</taxon>
        <taxon>Murinae</taxon>
        <taxon>Rattus</taxon>
    </lineage>
</organism>
<protein>
    <recommendedName>
        <fullName>Glutamine--fructose-6-phosphate aminotransferase [isomerizing] 1</fullName>
        <ecNumber evidence="6">2.6.1.16</ecNumber>
    </recommendedName>
    <alternativeName>
        <fullName>D-fructose-6-phosphate amidotransferase 1</fullName>
    </alternativeName>
    <alternativeName>
        <fullName>Glutamine:fructose-6-phosphate amidotransferase 1</fullName>
        <shortName>GFAT 1</shortName>
        <shortName>GFAT1</shortName>
    </alternativeName>
    <alternativeName>
        <fullName>Hexosephosphate aminotransferase 1</fullName>
    </alternativeName>
</protein>
<sequence>MCGIFAYLNYHVPRTRREILETLIKGLQRLEYRGYDSAGVGLDGGNDKDWEANACKIQLIKKKGKVKALDEEVHKQQDMDLDIEFDVHLGIAHTRWATHGEPSPVNSHPQRSDKNNEFIVIHNGIITNYKDLKKFLESKGYDFESETDTETIAKLVKYMYDNWESQDVSFTTLVERVIQQLEGAFALVFKSVHFPGQAVGTRRGSPLLIGVRSEHKLSTDHIPILYRTGKDKKGSCGLSRVDSTTCLFPVEEKAVEYYFASDASAVIEHTNRVIFLEDDDVAAVVDGRLSIHRIKRTARDHPGRAVQTLQMELQQIMKGNFSSFMQKEIFEQPESVVNTMRGRVNFDDYTVNLGGLKDHIKEIQRCRRLILIACGTSYHAGMATRQVLEELTELPVMVELASDFLDRNTPVFRDDVCFFISQSGETADTLMGLRYCKERGALTVGITNTVGSSISRETDCGVHINAGPEIGVASTKAYTSQFVSLVMFALMMCDDRISMQERRKEIMLGLKRLPDLIKEVLSMDDEIQKLATELYHQKSVLIMGRGYHYATCLEGALKIKEITYMHSEGILAGELKHGPLALVDKLMPVIMIIMRDHTYAKCQNALQQVVARQGRPVVICDKEDTETIKNTKRTIKVPHSVDCLQGILSVIPLQLLAFHLAVLRGYDVDFPRNLAKSVTVE</sequence>
<dbReference type="EC" id="2.6.1.16" evidence="6"/>
<dbReference type="EMBL" id="BC083889">
    <property type="protein sequence ID" value="AAH83889.1"/>
    <property type="molecule type" value="mRNA"/>
</dbReference>
<dbReference type="RefSeq" id="NP_001005879.1">
    <property type="nucleotide sequence ID" value="NM_001005879.1"/>
</dbReference>
<dbReference type="SMR" id="P82808"/>
<dbReference type="BioGRID" id="255576">
    <property type="interactions" value="3"/>
</dbReference>
<dbReference type="FunCoup" id="P82808">
    <property type="interactions" value="1873"/>
</dbReference>
<dbReference type="IntAct" id="P82808">
    <property type="interactions" value="2"/>
</dbReference>
<dbReference type="STRING" id="10116.ENSRNOP00000075660"/>
<dbReference type="MEROPS" id="C44.970"/>
<dbReference type="iPTMnet" id="P82808"/>
<dbReference type="PhosphoSitePlus" id="P82808"/>
<dbReference type="jPOST" id="P82808"/>
<dbReference type="PaxDb" id="10116-ENSRNOP00000025070"/>
<dbReference type="GeneID" id="297417"/>
<dbReference type="KEGG" id="rno:297417"/>
<dbReference type="UCSC" id="RGD:1549703">
    <property type="organism name" value="rat"/>
</dbReference>
<dbReference type="AGR" id="RGD:1549703"/>
<dbReference type="CTD" id="2673"/>
<dbReference type="RGD" id="1549703">
    <property type="gene designation" value="Gfpt1"/>
</dbReference>
<dbReference type="VEuPathDB" id="HostDB:ENSRNOG00000018507"/>
<dbReference type="eggNOG" id="KOG1268">
    <property type="taxonomic scope" value="Eukaryota"/>
</dbReference>
<dbReference type="HOGENOM" id="CLU_012520_5_2_1"/>
<dbReference type="InParanoid" id="P82808"/>
<dbReference type="BioCyc" id="MetaCyc:MONOMER-13170"/>
<dbReference type="Reactome" id="R-RNO-446210">
    <property type="pathway name" value="Synthesis of UDP-N-acetyl-glucosamine"/>
</dbReference>
<dbReference type="SABIO-RK" id="P82808"/>
<dbReference type="UniPathway" id="UPA00113">
    <property type="reaction ID" value="UER00528"/>
</dbReference>
<dbReference type="PRO" id="PR:P82808"/>
<dbReference type="Proteomes" id="UP000002494">
    <property type="component" value="Chromosome 4"/>
</dbReference>
<dbReference type="Bgee" id="ENSRNOG00000018507">
    <property type="expression patterns" value="Expressed in colon and 19 other cell types or tissues"/>
</dbReference>
<dbReference type="ExpressionAtlas" id="P82808">
    <property type="expression patterns" value="baseline and differential"/>
</dbReference>
<dbReference type="GO" id="GO:0016597">
    <property type="term" value="F:amino acid binding"/>
    <property type="evidence" value="ECO:0000314"/>
    <property type="project" value="RGD"/>
</dbReference>
<dbReference type="GO" id="GO:0030246">
    <property type="term" value="F:carbohydrate binding"/>
    <property type="evidence" value="ECO:0000314"/>
    <property type="project" value="RGD"/>
</dbReference>
<dbReference type="GO" id="GO:0097367">
    <property type="term" value="F:carbohydrate derivative binding"/>
    <property type="evidence" value="ECO:0007669"/>
    <property type="project" value="InterPro"/>
</dbReference>
<dbReference type="GO" id="GO:0004360">
    <property type="term" value="F:glutamine-fructose-6-phosphate transaminase (isomerizing) activity"/>
    <property type="evidence" value="ECO:0000314"/>
    <property type="project" value="RGD"/>
</dbReference>
<dbReference type="GO" id="GO:0042802">
    <property type="term" value="F:identical protein binding"/>
    <property type="evidence" value="ECO:0000353"/>
    <property type="project" value="RGD"/>
</dbReference>
<dbReference type="GO" id="GO:0032869">
    <property type="term" value="P:cellular response to insulin stimulus"/>
    <property type="evidence" value="ECO:0000270"/>
    <property type="project" value="RGD"/>
</dbReference>
<dbReference type="GO" id="GO:0032922">
    <property type="term" value="P:circadian regulation of gene expression"/>
    <property type="evidence" value="ECO:0000250"/>
    <property type="project" value="UniProtKB"/>
</dbReference>
<dbReference type="GO" id="GO:0006002">
    <property type="term" value="P:fructose 6-phosphate metabolic process"/>
    <property type="evidence" value="ECO:0000314"/>
    <property type="project" value="RGD"/>
</dbReference>
<dbReference type="GO" id="GO:0006042">
    <property type="term" value="P:glucosamine biosynthetic process"/>
    <property type="evidence" value="ECO:0000314"/>
    <property type="project" value="RGD"/>
</dbReference>
<dbReference type="GO" id="GO:0045719">
    <property type="term" value="P:negative regulation of glycogen biosynthetic process"/>
    <property type="evidence" value="ECO:0000315"/>
    <property type="project" value="RGD"/>
</dbReference>
<dbReference type="GO" id="GO:0006487">
    <property type="term" value="P:protein N-linked glycosylation"/>
    <property type="evidence" value="ECO:0000318"/>
    <property type="project" value="GO_Central"/>
</dbReference>
<dbReference type="GO" id="GO:0032868">
    <property type="term" value="P:response to insulin"/>
    <property type="evidence" value="ECO:0000270"/>
    <property type="project" value="RGD"/>
</dbReference>
<dbReference type="GO" id="GO:0009744">
    <property type="term" value="P:response to sucrose"/>
    <property type="evidence" value="ECO:0000270"/>
    <property type="project" value="RGD"/>
</dbReference>
<dbReference type="GO" id="GO:0006048">
    <property type="term" value="P:UDP-N-acetylglucosamine biosynthetic process"/>
    <property type="evidence" value="ECO:0000250"/>
    <property type="project" value="UniProtKB"/>
</dbReference>
<dbReference type="GO" id="GO:0006047">
    <property type="term" value="P:UDP-N-acetylglucosamine metabolic process"/>
    <property type="evidence" value="ECO:0000315"/>
    <property type="project" value="RGD"/>
</dbReference>
<dbReference type="CDD" id="cd00714">
    <property type="entry name" value="GFAT"/>
    <property type="match status" value="1"/>
</dbReference>
<dbReference type="CDD" id="cd05008">
    <property type="entry name" value="SIS_GlmS_GlmD_1"/>
    <property type="match status" value="1"/>
</dbReference>
<dbReference type="CDD" id="cd05009">
    <property type="entry name" value="SIS_GlmS_GlmD_2"/>
    <property type="match status" value="1"/>
</dbReference>
<dbReference type="FunFam" id="3.40.50.10490:FF:000001">
    <property type="entry name" value="Glutamine--fructose-6-phosphate aminotransferase [isomerizing]"/>
    <property type="match status" value="1"/>
</dbReference>
<dbReference type="FunFam" id="3.40.50.10490:FF:000126">
    <property type="entry name" value="Glutamine--fructose-6-phosphate aminotransferase [isomerizing] 1"/>
    <property type="match status" value="1"/>
</dbReference>
<dbReference type="FunFam" id="3.60.20.10:FF:000021">
    <property type="entry name" value="glutamine--fructose-6-phosphate aminotransferase [isomerizing] 1"/>
    <property type="match status" value="1"/>
</dbReference>
<dbReference type="Gene3D" id="3.40.50.10490">
    <property type="entry name" value="Glucose-6-phosphate isomerase like protein, domain 1"/>
    <property type="match status" value="2"/>
</dbReference>
<dbReference type="Gene3D" id="3.60.20.10">
    <property type="entry name" value="Glutamine Phosphoribosylpyrophosphate, subunit 1, domain 1"/>
    <property type="match status" value="1"/>
</dbReference>
<dbReference type="InterPro" id="IPR017932">
    <property type="entry name" value="GATase_2_dom"/>
</dbReference>
<dbReference type="InterPro" id="IPR005855">
    <property type="entry name" value="GFAT"/>
</dbReference>
<dbReference type="InterPro" id="IPR047084">
    <property type="entry name" value="GFAT_N"/>
</dbReference>
<dbReference type="InterPro" id="IPR035466">
    <property type="entry name" value="GlmS/AgaS_SIS"/>
</dbReference>
<dbReference type="InterPro" id="IPR035490">
    <property type="entry name" value="GlmS/FrlB_SIS"/>
</dbReference>
<dbReference type="InterPro" id="IPR029055">
    <property type="entry name" value="Ntn_hydrolases_N"/>
</dbReference>
<dbReference type="InterPro" id="IPR001347">
    <property type="entry name" value="SIS_dom"/>
</dbReference>
<dbReference type="InterPro" id="IPR046348">
    <property type="entry name" value="SIS_dom_sf"/>
</dbReference>
<dbReference type="NCBIfam" id="TIGR01135">
    <property type="entry name" value="glmS"/>
    <property type="match status" value="1"/>
</dbReference>
<dbReference type="NCBIfam" id="NF001484">
    <property type="entry name" value="PRK00331.1"/>
    <property type="match status" value="1"/>
</dbReference>
<dbReference type="PANTHER" id="PTHR10937">
    <property type="entry name" value="GLUCOSAMINE--FRUCTOSE-6-PHOSPHATE AMINOTRANSFERASE, ISOMERIZING"/>
    <property type="match status" value="1"/>
</dbReference>
<dbReference type="PANTHER" id="PTHR10937:SF12">
    <property type="entry name" value="GLUTAMINE--FRUCTOSE-6-PHOSPHATE AMINOTRANSFERASE [ISOMERIZING] 1"/>
    <property type="match status" value="1"/>
</dbReference>
<dbReference type="Pfam" id="PF13522">
    <property type="entry name" value="GATase_6"/>
    <property type="match status" value="1"/>
</dbReference>
<dbReference type="Pfam" id="PF01380">
    <property type="entry name" value="SIS"/>
    <property type="match status" value="2"/>
</dbReference>
<dbReference type="SUPFAM" id="SSF56235">
    <property type="entry name" value="N-terminal nucleophile aminohydrolases (Ntn hydrolases)"/>
    <property type="match status" value="1"/>
</dbReference>
<dbReference type="SUPFAM" id="SSF53697">
    <property type="entry name" value="SIS domain"/>
    <property type="match status" value="1"/>
</dbReference>
<dbReference type="PROSITE" id="PS51278">
    <property type="entry name" value="GATASE_TYPE_2"/>
    <property type="match status" value="1"/>
</dbReference>
<dbReference type="PROSITE" id="PS51464">
    <property type="entry name" value="SIS"/>
    <property type="match status" value="2"/>
</dbReference>
<keyword id="KW-0090">Biological rhythms</keyword>
<keyword id="KW-0903">Direct protein sequencing</keyword>
<keyword id="KW-0315">Glutamine amidotransferase</keyword>
<keyword id="KW-0597">Phosphoprotein</keyword>
<keyword id="KW-1185">Reference proteome</keyword>
<keyword id="KW-0677">Repeat</keyword>
<keyword id="KW-0808">Transferase</keyword>